<feature type="chain" id="PRO_1000114127" description="Aminomethyltransferase">
    <location>
        <begin position="1"/>
        <end position="368"/>
    </location>
</feature>
<comment type="function">
    <text evidence="1">The glycine cleavage system catalyzes the degradation of glycine.</text>
</comment>
<comment type="catalytic activity">
    <reaction evidence="1">
        <text>N(6)-[(R)-S(8)-aminomethyldihydrolipoyl]-L-lysyl-[protein] + (6S)-5,6,7,8-tetrahydrofolate = N(6)-[(R)-dihydrolipoyl]-L-lysyl-[protein] + (6R)-5,10-methylene-5,6,7,8-tetrahydrofolate + NH4(+)</text>
        <dbReference type="Rhea" id="RHEA:16945"/>
        <dbReference type="Rhea" id="RHEA-COMP:10475"/>
        <dbReference type="Rhea" id="RHEA-COMP:10492"/>
        <dbReference type="ChEBI" id="CHEBI:15636"/>
        <dbReference type="ChEBI" id="CHEBI:28938"/>
        <dbReference type="ChEBI" id="CHEBI:57453"/>
        <dbReference type="ChEBI" id="CHEBI:83100"/>
        <dbReference type="ChEBI" id="CHEBI:83143"/>
        <dbReference type="EC" id="2.1.2.10"/>
    </reaction>
</comment>
<comment type="subunit">
    <text evidence="1">The glycine cleavage system is composed of four proteins: P, T, L and H.</text>
</comment>
<comment type="similarity">
    <text evidence="1">Belongs to the GcvT family.</text>
</comment>
<reference key="1">
    <citation type="journal article" date="2010" name="J. Bacteriol.">
        <title>Whole genome sequences of two Xylella fastidiosa strains (M12 and M23) causing almond leaf scorch disease in California.</title>
        <authorList>
            <person name="Chen J."/>
            <person name="Xie G."/>
            <person name="Han S."/>
            <person name="Chertkov O."/>
            <person name="Sims D."/>
            <person name="Civerolo E.L."/>
        </authorList>
    </citation>
    <scope>NUCLEOTIDE SEQUENCE [LARGE SCALE GENOMIC DNA]</scope>
    <source>
        <strain>M12</strain>
    </source>
</reference>
<accession>B0U270</accession>
<dbReference type="EC" id="2.1.2.10" evidence="1"/>
<dbReference type="EMBL" id="CP000941">
    <property type="protein sequence ID" value="ACA11192.1"/>
    <property type="molecule type" value="Genomic_DNA"/>
</dbReference>
<dbReference type="RefSeq" id="WP_004085044.1">
    <property type="nucleotide sequence ID" value="NC_010513.1"/>
</dbReference>
<dbReference type="SMR" id="B0U270"/>
<dbReference type="KEGG" id="xfm:Xfasm12_0155"/>
<dbReference type="HOGENOM" id="CLU_007884_10_2_6"/>
<dbReference type="GO" id="GO:0005829">
    <property type="term" value="C:cytosol"/>
    <property type="evidence" value="ECO:0007669"/>
    <property type="project" value="TreeGrafter"/>
</dbReference>
<dbReference type="GO" id="GO:0005960">
    <property type="term" value="C:glycine cleavage complex"/>
    <property type="evidence" value="ECO:0007669"/>
    <property type="project" value="InterPro"/>
</dbReference>
<dbReference type="GO" id="GO:0004047">
    <property type="term" value="F:aminomethyltransferase activity"/>
    <property type="evidence" value="ECO:0007669"/>
    <property type="project" value="UniProtKB-UniRule"/>
</dbReference>
<dbReference type="GO" id="GO:0008483">
    <property type="term" value="F:transaminase activity"/>
    <property type="evidence" value="ECO:0007669"/>
    <property type="project" value="UniProtKB-KW"/>
</dbReference>
<dbReference type="GO" id="GO:0019464">
    <property type="term" value="P:glycine decarboxylation via glycine cleavage system"/>
    <property type="evidence" value="ECO:0007669"/>
    <property type="project" value="UniProtKB-UniRule"/>
</dbReference>
<dbReference type="FunFam" id="3.30.70.1400:FF:000001">
    <property type="entry name" value="Aminomethyltransferase"/>
    <property type="match status" value="1"/>
</dbReference>
<dbReference type="FunFam" id="4.10.1250.10:FF:000001">
    <property type="entry name" value="Aminomethyltransferase"/>
    <property type="match status" value="1"/>
</dbReference>
<dbReference type="Gene3D" id="2.40.30.110">
    <property type="entry name" value="Aminomethyltransferase beta-barrel domains"/>
    <property type="match status" value="1"/>
</dbReference>
<dbReference type="Gene3D" id="3.30.70.1400">
    <property type="entry name" value="Aminomethyltransferase beta-barrel domains"/>
    <property type="match status" value="1"/>
</dbReference>
<dbReference type="Gene3D" id="4.10.1250.10">
    <property type="entry name" value="Aminomethyltransferase fragment"/>
    <property type="match status" value="1"/>
</dbReference>
<dbReference type="Gene3D" id="3.30.1360.120">
    <property type="entry name" value="Probable tRNA modification gtpase trme, domain 1"/>
    <property type="match status" value="1"/>
</dbReference>
<dbReference type="HAMAP" id="MF_00259">
    <property type="entry name" value="GcvT"/>
    <property type="match status" value="1"/>
</dbReference>
<dbReference type="InterPro" id="IPR006223">
    <property type="entry name" value="GCS_T"/>
</dbReference>
<dbReference type="InterPro" id="IPR022903">
    <property type="entry name" value="GCS_T_bac"/>
</dbReference>
<dbReference type="InterPro" id="IPR013977">
    <property type="entry name" value="GCST_C"/>
</dbReference>
<dbReference type="InterPro" id="IPR006222">
    <property type="entry name" value="GCV_T_N"/>
</dbReference>
<dbReference type="InterPro" id="IPR028896">
    <property type="entry name" value="GcvT/YgfZ/DmdA"/>
</dbReference>
<dbReference type="InterPro" id="IPR029043">
    <property type="entry name" value="GcvT/YgfZ_C"/>
</dbReference>
<dbReference type="InterPro" id="IPR027266">
    <property type="entry name" value="TrmE/GcvT_dom1"/>
</dbReference>
<dbReference type="NCBIfam" id="TIGR00528">
    <property type="entry name" value="gcvT"/>
    <property type="match status" value="1"/>
</dbReference>
<dbReference type="NCBIfam" id="NF001567">
    <property type="entry name" value="PRK00389.1"/>
    <property type="match status" value="1"/>
</dbReference>
<dbReference type="PANTHER" id="PTHR43757">
    <property type="entry name" value="AMINOMETHYLTRANSFERASE"/>
    <property type="match status" value="1"/>
</dbReference>
<dbReference type="PANTHER" id="PTHR43757:SF2">
    <property type="entry name" value="AMINOMETHYLTRANSFERASE, MITOCHONDRIAL"/>
    <property type="match status" value="1"/>
</dbReference>
<dbReference type="Pfam" id="PF01571">
    <property type="entry name" value="GCV_T"/>
    <property type="match status" value="1"/>
</dbReference>
<dbReference type="Pfam" id="PF08669">
    <property type="entry name" value="GCV_T_C"/>
    <property type="match status" value="1"/>
</dbReference>
<dbReference type="PIRSF" id="PIRSF006487">
    <property type="entry name" value="GcvT"/>
    <property type="match status" value="1"/>
</dbReference>
<dbReference type="SUPFAM" id="SSF101790">
    <property type="entry name" value="Aminomethyltransferase beta-barrel domain"/>
    <property type="match status" value="1"/>
</dbReference>
<dbReference type="SUPFAM" id="SSF103025">
    <property type="entry name" value="Folate-binding domain"/>
    <property type="match status" value="1"/>
</dbReference>
<name>GCST_XYLFM</name>
<organism>
    <name type="scientific">Xylella fastidiosa (strain M12)</name>
    <dbReference type="NCBI Taxonomy" id="405440"/>
    <lineage>
        <taxon>Bacteria</taxon>
        <taxon>Pseudomonadati</taxon>
        <taxon>Pseudomonadota</taxon>
        <taxon>Gammaproteobacteria</taxon>
        <taxon>Lysobacterales</taxon>
        <taxon>Lysobacteraceae</taxon>
        <taxon>Xylella</taxon>
    </lineage>
</organism>
<keyword id="KW-0032">Aminotransferase</keyword>
<keyword id="KW-0808">Transferase</keyword>
<sequence>MIKKTILNDTHRALGAKMVDFSGWEMPIHYGSQIDEHHHVRRNAGIFDVSHMTVIDLHGTQVRPLLRRLLANSVDKLKVPGKALYSCMLNPQGGVIDDLIVYYLREDYFRFIVNAATREKDLAWINTQASAFNVRVEERADLAMLAVQGPAARAQVTNLLAETHRDAVEKLGRFAALEVASHSKKTLFISRTGYTGEDGFEILLPQEETITLWNALLKTGVKPIGLGARDTLRLEAGMNLYGQDMDEQVSPYEAALGWTVMLDEGRNFIGRNVLEQQKTNGVSRQMIGLLMDEKGVLRHGQKVLTAQGEGHILSGTFSPTLNKAIGFARVPAGKPSEVRVNIRDRAIPVRVVKFPFVREGQTQPNIFD</sequence>
<gene>
    <name evidence="1" type="primary">gcvT</name>
    <name type="ordered locus">Xfasm12_0155</name>
</gene>
<proteinExistence type="inferred from homology"/>
<evidence type="ECO:0000255" key="1">
    <source>
        <dbReference type="HAMAP-Rule" id="MF_00259"/>
    </source>
</evidence>
<protein>
    <recommendedName>
        <fullName evidence="1">Aminomethyltransferase</fullName>
        <ecNumber evidence="1">2.1.2.10</ecNumber>
    </recommendedName>
    <alternativeName>
        <fullName evidence="1">Glycine cleavage system T protein</fullName>
    </alternativeName>
</protein>